<comment type="function">
    <text evidence="1">Catalyzes the acyloin condensation reaction between C atoms 2 and 3 of pyruvate and glyceraldehyde 3-phosphate to yield 1-deoxy-D-xylulose-5-phosphate (DXP).</text>
</comment>
<comment type="catalytic activity">
    <reaction evidence="1">
        <text>D-glyceraldehyde 3-phosphate + pyruvate + H(+) = 1-deoxy-D-xylulose 5-phosphate + CO2</text>
        <dbReference type="Rhea" id="RHEA:12605"/>
        <dbReference type="ChEBI" id="CHEBI:15361"/>
        <dbReference type="ChEBI" id="CHEBI:15378"/>
        <dbReference type="ChEBI" id="CHEBI:16526"/>
        <dbReference type="ChEBI" id="CHEBI:57792"/>
        <dbReference type="ChEBI" id="CHEBI:59776"/>
        <dbReference type="EC" id="2.2.1.7"/>
    </reaction>
</comment>
<comment type="cofactor">
    <cofactor evidence="1">
        <name>Mg(2+)</name>
        <dbReference type="ChEBI" id="CHEBI:18420"/>
    </cofactor>
    <text evidence="1">Binds 1 Mg(2+) ion per subunit.</text>
</comment>
<comment type="cofactor">
    <cofactor evidence="1">
        <name>thiamine diphosphate</name>
        <dbReference type="ChEBI" id="CHEBI:58937"/>
    </cofactor>
    <text evidence="1">Binds 1 thiamine pyrophosphate per subunit.</text>
</comment>
<comment type="pathway">
    <text evidence="1">Metabolic intermediate biosynthesis; 1-deoxy-D-xylulose 5-phosphate biosynthesis; 1-deoxy-D-xylulose 5-phosphate from D-glyceraldehyde 3-phosphate and pyruvate: step 1/1.</text>
</comment>
<comment type="subunit">
    <text evidence="1">Homodimer.</text>
</comment>
<comment type="similarity">
    <text evidence="1">Belongs to the transketolase family. DXPS subfamily.</text>
</comment>
<protein>
    <recommendedName>
        <fullName evidence="1">1-deoxy-D-xylulose-5-phosphate synthase</fullName>
        <ecNumber evidence="1">2.2.1.7</ecNumber>
    </recommendedName>
    <alternativeName>
        <fullName evidence="1">1-deoxyxylulose-5-phosphate synthase</fullName>
        <shortName evidence="1">DXP synthase</shortName>
        <shortName evidence="1">DXPS</shortName>
    </alternativeName>
</protein>
<evidence type="ECO:0000255" key="1">
    <source>
        <dbReference type="HAMAP-Rule" id="MF_00315"/>
    </source>
</evidence>
<gene>
    <name evidence="1" type="primary">dxs</name>
    <name type="ordered locus">P9303_15371</name>
</gene>
<reference key="1">
    <citation type="journal article" date="2007" name="PLoS Genet.">
        <title>Patterns and implications of gene gain and loss in the evolution of Prochlorococcus.</title>
        <authorList>
            <person name="Kettler G.C."/>
            <person name="Martiny A.C."/>
            <person name="Huang K."/>
            <person name="Zucker J."/>
            <person name="Coleman M.L."/>
            <person name="Rodrigue S."/>
            <person name="Chen F."/>
            <person name="Lapidus A."/>
            <person name="Ferriera S."/>
            <person name="Johnson J."/>
            <person name="Steglich C."/>
            <person name="Church G.M."/>
            <person name="Richardson P."/>
            <person name="Chisholm S.W."/>
        </authorList>
    </citation>
    <scope>NUCLEOTIDE SEQUENCE [LARGE SCALE GENOMIC DNA]</scope>
    <source>
        <strain>MIT 9303</strain>
    </source>
</reference>
<name>DXS_PROM3</name>
<proteinExistence type="inferred from homology"/>
<sequence>MRLSELTHPNQLHGLSIAELEDVARQIRERHLEVVSTSGGHLGPGLGVVELTLALYQTLDLDHDRVVWDVGHQAYPHKLITGRYGDFNTLRQQGGVAGYLKRCESSFDHFGAGHASTSISAALGMAVARERRGESFKCVAVIGDGALTGGIALEAINHAGHMPNTPFLVVLNDNDMSISPPVGALSTHLNRMRHSAPVQFISDSVEERVKSLPFMGGELPAELDLLKGSMRRLSVPKVGAVFEELGFTYMGPIDGHDIERMVRTFETAHKVGGPVLVHVVTTKGKGYPYAEADQVGYHAQSAFDLITGKALPSKGKKPPSYSKVFGETLIKLCQQDSTVVGITAAMATGTGLDLLQKAVPEQYIDVGIAEQHAVTLAAGMACEGLKPVLAIYSTFLQRAFDQLIHDVGIQNLPVTFVMDRAGIVGADGPTHQGQYDISYFRAIPNFTVMAPKDEAELQRMLVTCLQHQGPAALRIPRGSGEGVPLLDEGWEPLAIGRGEVLCEGDDLLIVAYGVMVPAAMITAQLLQEAGVKATVINARFLRPLDQALIHPLARRIGRVVTMEEGALAGGFGAAVVESLSDQDVLVPTFRIGIPDQLVDHASPQQSREALGLTPTQMSERIQEHFCLNSQPSLVGQEAPQALST</sequence>
<dbReference type="EC" id="2.2.1.7" evidence="1"/>
<dbReference type="EMBL" id="CP000554">
    <property type="protein sequence ID" value="ABM78281.1"/>
    <property type="molecule type" value="Genomic_DNA"/>
</dbReference>
<dbReference type="RefSeq" id="WP_011826172.1">
    <property type="nucleotide sequence ID" value="NC_008820.1"/>
</dbReference>
<dbReference type="SMR" id="A2C9X1"/>
<dbReference type="STRING" id="59922.P9303_15371"/>
<dbReference type="KEGG" id="pmf:P9303_15371"/>
<dbReference type="HOGENOM" id="CLU_009227_1_4_3"/>
<dbReference type="BioCyc" id="PMAR59922:G1G80-1334-MONOMER"/>
<dbReference type="UniPathway" id="UPA00064">
    <property type="reaction ID" value="UER00091"/>
</dbReference>
<dbReference type="Proteomes" id="UP000002274">
    <property type="component" value="Chromosome"/>
</dbReference>
<dbReference type="GO" id="GO:0005829">
    <property type="term" value="C:cytosol"/>
    <property type="evidence" value="ECO:0007669"/>
    <property type="project" value="TreeGrafter"/>
</dbReference>
<dbReference type="GO" id="GO:0008661">
    <property type="term" value="F:1-deoxy-D-xylulose-5-phosphate synthase activity"/>
    <property type="evidence" value="ECO:0007669"/>
    <property type="project" value="UniProtKB-UniRule"/>
</dbReference>
<dbReference type="GO" id="GO:0000287">
    <property type="term" value="F:magnesium ion binding"/>
    <property type="evidence" value="ECO:0007669"/>
    <property type="project" value="UniProtKB-UniRule"/>
</dbReference>
<dbReference type="GO" id="GO:0030976">
    <property type="term" value="F:thiamine pyrophosphate binding"/>
    <property type="evidence" value="ECO:0007669"/>
    <property type="project" value="UniProtKB-UniRule"/>
</dbReference>
<dbReference type="GO" id="GO:0052865">
    <property type="term" value="P:1-deoxy-D-xylulose 5-phosphate biosynthetic process"/>
    <property type="evidence" value="ECO:0007669"/>
    <property type="project" value="UniProtKB-UniPathway"/>
</dbReference>
<dbReference type="GO" id="GO:0019288">
    <property type="term" value="P:isopentenyl diphosphate biosynthetic process, methylerythritol 4-phosphate pathway"/>
    <property type="evidence" value="ECO:0007669"/>
    <property type="project" value="TreeGrafter"/>
</dbReference>
<dbReference type="GO" id="GO:0016114">
    <property type="term" value="P:terpenoid biosynthetic process"/>
    <property type="evidence" value="ECO:0007669"/>
    <property type="project" value="UniProtKB-UniRule"/>
</dbReference>
<dbReference type="GO" id="GO:0009228">
    <property type="term" value="P:thiamine biosynthetic process"/>
    <property type="evidence" value="ECO:0007669"/>
    <property type="project" value="UniProtKB-UniRule"/>
</dbReference>
<dbReference type="CDD" id="cd02007">
    <property type="entry name" value="TPP_DXS"/>
    <property type="match status" value="1"/>
</dbReference>
<dbReference type="CDD" id="cd07033">
    <property type="entry name" value="TPP_PYR_DXS_TK_like"/>
    <property type="match status" value="1"/>
</dbReference>
<dbReference type="FunFam" id="3.40.50.920:FF:000002">
    <property type="entry name" value="1-deoxy-D-xylulose-5-phosphate synthase"/>
    <property type="match status" value="1"/>
</dbReference>
<dbReference type="FunFam" id="3.40.50.970:FF:000005">
    <property type="entry name" value="1-deoxy-D-xylulose-5-phosphate synthase"/>
    <property type="match status" value="1"/>
</dbReference>
<dbReference type="Gene3D" id="3.40.50.920">
    <property type="match status" value="1"/>
</dbReference>
<dbReference type="Gene3D" id="3.40.50.970">
    <property type="match status" value="2"/>
</dbReference>
<dbReference type="HAMAP" id="MF_00315">
    <property type="entry name" value="DXP_synth"/>
    <property type="match status" value="1"/>
</dbReference>
<dbReference type="InterPro" id="IPR005477">
    <property type="entry name" value="Dxylulose-5-P_synthase"/>
</dbReference>
<dbReference type="InterPro" id="IPR029061">
    <property type="entry name" value="THDP-binding"/>
</dbReference>
<dbReference type="InterPro" id="IPR009014">
    <property type="entry name" value="Transketo_C/PFOR_II"/>
</dbReference>
<dbReference type="InterPro" id="IPR005475">
    <property type="entry name" value="Transketolase-like_Pyr-bd"/>
</dbReference>
<dbReference type="InterPro" id="IPR020826">
    <property type="entry name" value="Transketolase_BS"/>
</dbReference>
<dbReference type="InterPro" id="IPR033248">
    <property type="entry name" value="Transketolase_C"/>
</dbReference>
<dbReference type="InterPro" id="IPR049557">
    <property type="entry name" value="Transketolase_CS"/>
</dbReference>
<dbReference type="NCBIfam" id="TIGR00204">
    <property type="entry name" value="dxs"/>
    <property type="match status" value="1"/>
</dbReference>
<dbReference type="NCBIfam" id="NF003933">
    <property type="entry name" value="PRK05444.2-2"/>
    <property type="match status" value="1"/>
</dbReference>
<dbReference type="PANTHER" id="PTHR43322">
    <property type="entry name" value="1-D-DEOXYXYLULOSE 5-PHOSPHATE SYNTHASE-RELATED"/>
    <property type="match status" value="1"/>
</dbReference>
<dbReference type="PANTHER" id="PTHR43322:SF5">
    <property type="entry name" value="1-DEOXY-D-XYLULOSE-5-PHOSPHATE SYNTHASE, CHLOROPLASTIC"/>
    <property type="match status" value="1"/>
</dbReference>
<dbReference type="Pfam" id="PF13292">
    <property type="entry name" value="DXP_synthase_N"/>
    <property type="match status" value="1"/>
</dbReference>
<dbReference type="Pfam" id="PF02779">
    <property type="entry name" value="Transket_pyr"/>
    <property type="match status" value="1"/>
</dbReference>
<dbReference type="Pfam" id="PF02780">
    <property type="entry name" value="Transketolase_C"/>
    <property type="match status" value="1"/>
</dbReference>
<dbReference type="SMART" id="SM00861">
    <property type="entry name" value="Transket_pyr"/>
    <property type="match status" value="1"/>
</dbReference>
<dbReference type="SUPFAM" id="SSF52518">
    <property type="entry name" value="Thiamin diphosphate-binding fold (THDP-binding)"/>
    <property type="match status" value="2"/>
</dbReference>
<dbReference type="SUPFAM" id="SSF52922">
    <property type="entry name" value="TK C-terminal domain-like"/>
    <property type="match status" value="1"/>
</dbReference>
<dbReference type="PROSITE" id="PS00801">
    <property type="entry name" value="TRANSKETOLASE_1"/>
    <property type="match status" value="1"/>
</dbReference>
<dbReference type="PROSITE" id="PS00802">
    <property type="entry name" value="TRANSKETOLASE_2"/>
    <property type="match status" value="1"/>
</dbReference>
<feature type="chain" id="PRO_1000019057" description="1-deoxy-D-xylulose-5-phosphate synthase">
    <location>
        <begin position="1"/>
        <end position="644"/>
    </location>
</feature>
<feature type="binding site" evidence="1">
    <location>
        <position position="72"/>
    </location>
    <ligand>
        <name>thiamine diphosphate</name>
        <dbReference type="ChEBI" id="CHEBI:58937"/>
    </ligand>
</feature>
<feature type="binding site" evidence="1">
    <location>
        <begin position="113"/>
        <end position="115"/>
    </location>
    <ligand>
        <name>thiamine diphosphate</name>
        <dbReference type="ChEBI" id="CHEBI:58937"/>
    </ligand>
</feature>
<feature type="binding site" evidence="1">
    <location>
        <position position="144"/>
    </location>
    <ligand>
        <name>Mg(2+)</name>
        <dbReference type="ChEBI" id="CHEBI:18420"/>
    </ligand>
</feature>
<feature type="binding site" evidence="1">
    <location>
        <begin position="145"/>
        <end position="146"/>
    </location>
    <ligand>
        <name>thiamine diphosphate</name>
        <dbReference type="ChEBI" id="CHEBI:58937"/>
    </ligand>
</feature>
<feature type="binding site" evidence="1">
    <location>
        <position position="174"/>
    </location>
    <ligand>
        <name>Mg(2+)</name>
        <dbReference type="ChEBI" id="CHEBI:18420"/>
    </ligand>
</feature>
<feature type="binding site" evidence="1">
    <location>
        <position position="174"/>
    </location>
    <ligand>
        <name>thiamine diphosphate</name>
        <dbReference type="ChEBI" id="CHEBI:58937"/>
    </ligand>
</feature>
<feature type="binding site" evidence="1">
    <location>
        <position position="287"/>
    </location>
    <ligand>
        <name>thiamine diphosphate</name>
        <dbReference type="ChEBI" id="CHEBI:58937"/>
    </ligand>
</feature>
<feature type="binding site" evidence="1">
    <location>
        <position position="370"/>
    </location>
    <ligand>
        <name>thiamine diphosphate</name>
        <dbReference type="ChEBI" id="CHEBI:58937"/>
    </ligand>
</feature>
<keyword id="KW-0414">Isoprene biosynthesis</keyword>
<keyword id="KW-0460">Magnesium</keyword>
<keyword id="KW-0479">Metal-binding</keyword>
<keyword id="KW-0784">Thiamine biosynthesis</keyword>
<keyword id="KW-0786">Thiamine pyrophosphate</keyword>
<keyword id="KW-0808">Transferase</keyword>
<accession>A2C9X1</accession>
<organism>
    <name type="scientific">Prochlorococcus marinus (strain MIT 9303)</name>
    <dbReference type="NCBI Taxonomy" id="59922"/>
    <lineage>
        <taxon>Bacteria</taxon>
        <taxon>Bacillati</taxon>
        <taxon>Cyanobacteriota</taxon>
        <taxon>Cyanophyceae</taxon>
        <taxon>Synechococcales</taxon>
        <taxon>Prochlorococcaceae</taxon>
        <taxon>Prochlorococcus</taxon>
    </lineage>
</organism>